<protein>
    <recommendedName>
        <fullName>Sortilin-related receptor</fullName>
    </recommendedName>
    <alternativeName>
        <fullName>Gp250</fullName>
    </alternativeName>
    <alternativeName>
        <fullName>Low-density lipoprotein receptor relative with 11 ligand-binding repeats</fullName>
        <shortName>LDLR relative with 11 ligand-binding repeats</shortName>
        <shortName evidence="29">LR11</shortName>
    </alternativeName>
    <alternativeName>
        <fullName>SorLA-1</fullName>
    </alternativeName>
    <alternativeName>
        <fullName>Sorting protein-related receptor containing LDLR class A repeats</fullName>
        <shortName evidence="28">mSorLA</shortName>
    </alternativeName>
</protein>
<feature type="signal peptide" evidence="4">
    <location>
        <begin position="1"/>
        <end position="28"/>
    </location>
</feature>
<feature type="propeptide" id="PRO_0000033166" description="Removed in mature form" evidence="1">
    <location>
        <begin position="29"/>
        <end position="81"/>
    </location>
</feature>
<feature type="chain" id="PRO_0000033167" description="Sortilin-related receptor">
    <location>
        <begin position="82"/>
        <end position="2215"/>
    </location>
</feature>
<feature type="topological domain" description="Lumenal" evidence="4">
    <location>
        <begin position="82"/>
        <end position="2138"/>
    </location>
</feature>
<feature type="transmembrane region" description="Helical" evidence="4">
    <location>
        <begin position="2139"/>
        <end position="2159"/>
    </location>
</feature>
<feature type="topological domain" description="Cytoplasmic" evidence="4">
    <location>
        <begin position="2160"/>
        <end position="2215"/>
    </location>
</feature>
<feature type="repeat" description="BNR 1">
    <location>
        <begin position="136"/>
        <end position="147"/>
    </location>
</feature>
<feature type="repeat" description="BNR 2">
    <location>
        <begin position="232"/>
        <end position="243"/>
    </location>
</feature>
<feature type="repeat" description="BNR 3">
    <location>
        <begin position="441"/>
        <end position="452"/>
    </location>
</feature>
<feature type="repeat" description="BNR 4">
    <location>
        <begin position="521"/>
        <end position="532"/>
    </location>
</feature>
<feature type="repeat" description="BNR 5">
    <location>
        <begin position="562"/>
        <end position="573"/>
    </location>
</feature>
<feature type="repeat" description="LDL-receptor class B 1">
    <location>
        <begin position="800"/>
        <end position="843"/>
    </location>
</feature>
<feature type="repeat" description="LDL-receptor class B 2">
    <location>
        <begin position="844"/>
        <end position="887"/>
    </location>
</feature>
<feature type="repeat" description="LDL-receptor class B 3">
    <location>
        <begin position="888"/>
        <end position="932"/>
    </location>
</feature>
<feature type="repeat" description="LDL-receptor class B 4">
    <location>
        <begin position="933"/>
        <end position="972"/>
    </location>
</feature>
<feature type="repeat" description="LDL-receptor class B 5">
    <location>
        <begin position="973"/>
        <end position="1013"/>
    </location>
</feature>
<feature type="domain" description="EGF-like">
    <location>
        <begin position="1026"/>
        <end position="1072"/>
    </location>
</feature>
<feature type="domain" description="LDL-receptor class A 1" evidence="5">
    <location>
        <begin position="1076"/>
        <end position="1114"/>
    </location>
</feature>
<feature type="domain" description="LDL-receptor class A 2" evidence="5">
    <location>
        <begin position="1115"/>
        <end position="1155"/>
    </location>
</feature>
<feature type="domain" description="LDL-receptor class A 3" evidence="5">
    <location>
        <begin position="1156"/>
        <end position="1194"/>
    </location>
</feature>
<feature type="domain" description="LDL-receptor class A 4" evidence="5">
    <location>
        <begin position="1198"/>
        <end position="1236"/>
    </location>
</feature>
<feature type="domain" description="LDL-receptor class A 5" evidence="5">
    <location>
        <begin position="1238"/>
        <end position="1272"/>
    </location>
</feature>
<feature type="domain" description="LDL-receptor class A 6" evidence="5">
    <location>
        <begin position="1273"/>
        <end position="1317"/>
    </location>
</feature>
<feature type="domain" description="LDL-receptor class A 7" evidence="5">
    <location>
        <begin position="1323"/>
        <end position="1361"/>
    </location>
</feature>
<feature type="domain" description="LDL-receptor class A 8" evidence="5">
    <location>
        <begin position="1366"/>
        <end position="1405"/>
    </location>
</feature>
<feature type="domain" description="LDL-receptor class A 9" evidence="5">
    <location>
        <begin position="1417"/>
        <end position="1455"/>
    </location>
</feature>
<feature type="domain" description="LDL-receptor class A 10" evidence="5">
    <location>
        <begin position="1469"/>
        <end position="1508"/>
    </location>
</feature>
<feature type="domain" description="LDL-receptor class A 11" evidence="5">
    <location>
        <begin position="1512"/>
        <end position="1551"/>
    </location>
</feature>
<feature type="domain" description="Fibronectin type-III 1" evidence="6">
    <location>
        <begin position="1557"/>
        <end position="1649"/>
    </location>
</feature>
<feature type="domain" description="Fibronectin type-III 2" evidence="6">
    <location>
        <begin position="1653"/>
        <end position="1745"/>
    </location>
</feature>
<feature type="domain" description="Fibronectin type-III 3" evidence="6">
    <location>
        <begin position="1747"/>
        <end position="1846"/>
    </location>
</feature>
<feature type="domain" description="Fibronectin type-III 4" evidence="6">
    <location>
        <begin position="1844"/>
        <end position="1928"/>
    </location>
</feature>
<feature type="domain" description="Fibronectin type-III 5" evidence="6">
    <location>
        <begin position="1935"/>
        <end position="2030"/>
    </location>
</feature>
<feature type="domain" description="Fibronectin type-III 6" evidence="6">
    <location>
        <begin position="2031"/>
        <end position="2119"/>
    </location>
</feature>
<feature type="region of interest" description="Disordered" evidence="7">
    <location>
        <begin position="59"/>
        <end position="84"/>
    </location>
</feature>
<feature type="region of interest" description="Required for efficient Golgi apparatus - endosome sorting" evidence="2">
    <location>
        <begin position="2191"/>
        <end position="2215"/>
    </location>
</feature>
<feature type="region of interest" description="Required for interaction with GGA1 and GGA2" evidence="2">
    <location>
        <begin position="2202"/>
        <end position="2215"/>
    </location>
</feature>
<feature type="short sequence motif" description="Potential nuclear localization signal for the C-terminal fragment generated by PSEN1" evidence="2">
    <location>
        <begin position="2162"/>
        <end position="2165"/>
    </location>
</feature>
<feature type="short sequence motif" description="Endocytosis signal" evidence="4">
    <location>
        <begin position="2173"/>
        <end position="2178"/>
    </location>
</feature>
<feature type="short sequence motif" description="DXXLL motif involved in the interaction with GGA1" evidence="2">
    <location>
        <begin position="2209"/>
        <end position="2213"/>
    </location>
</feature>
<feature type="modified residue" description="Phosphoserine" evidence="2">
    <location>
        <position position="114"/>
    </location>
</feature>
<feature type="modified residue" description="Phosphoserine; by ROCK2" evidence="2">
    <location>
        <position position="2207"/>
    </location>
</feature>
<feature type="glycosylation site" description="N-linked (GlcNAc...) asparagine" evidence="4">
    <location>
        <position position="99"/>
    </location>
</feature>
<feature type="glycosylation site" description="N-linked (GlcNAc...) asparagine" evidence="4">
    <location>
        <position position="158"/>
    </location>
</feature>
<feature type="glycosylation site" description="N-linked (GlcNAc...) asparagine" evidence="4">
    <location>
        <position position="367"/>
    </location>
</feature>
<feature type="glycosylation site" description="N-linked (GlcNAc...) asparagine" evidence="4">
    <location>
        <position position="368"/>
    </location>
</feature>
<feature type="glycosylation site" description="N-linked (GlcNAc...) asparagine" evidence="4">
    <location>
        <position position="430"/>
    </location>
</feature>
<feature type="glycosylation site" description="N-linked (GlcNAc...) asparagine" evidence="4">
    <location>
        <position position="616"/>
    </location>
</feature>
<feature type="glycosylation site" description="N-linked (GlcNAc...) asparagine" evidence="4">
    <location>
        <position position="674"/>
    </location>
</feature>
<feature type="glycosylation site" description="N-linked (GlcNAc...) asparagine" evidence="4">
    <location>
        <position position="818"/>
    </location>
</feature>
<feature type="glycosylation site" description="N-linked (GlcNAc...) asparagine" evidence="4">
    <location>
        <position position="871"/>
    </location>
</feature>
<feature type="glycosylation site" description="N-linked (GlcNAc...) asparagine" evidence="4">
    <location>
        <position position="1035"/>
    </location>
</feature>
<feature type="glycosylation site" description="N-linked (GlcNAc...) asparagine" evidence="4">
    <location>
        <position position="1068"/>
    </location>
</feature>
<feature type="glycosylation site" description="N-linked (GlcNAc...) asparagine" evidence="4">
    <location>
        <position position="1164"/>
    </location>
</feature>
<feature type="glycosylation site" description="N-linked (GlcNAc...) asparagine" evidence="4">
    <location>
        <position position="1191"/>
    </location>
</feature>
<feature type="glycosylation site" description="N-linked (GlcNAc...) asparagine" evidence="4">
    <location>
        <position position="1246"/>
    </location>
</feature>
<feature type="glycosylation site" description="N-linked (GlcNAc...) asparagine" evidence="4">
    <location>
        <position position="1367"/>
    </location>
</feature>
<feature type="glycosylation site" description="N-linked (GlcNAc...) asparagine" evidence="4">
    <location>
        <position position="1458"/>
    </location>
</feature>
<feature type="glycosylation site" description="N-linked (GlcNAc...) asparagine" evidence="4">
    <location>
        <position position="1608"/>
    </location>
</feature>
<feature type="glycosylation site" description="N-linked (GlcNAc...) asparagine" evidence="4">
    <location>
        <position position="1706"/>
    </location>
</feature>
<feature type="glycosylation site" description="N-linked (GlcNAc...) asparagine" evidence="4">
    <location>
        <position position="1733"/>
    </location>
</feature>
<feature type="glycosylation site" description="N-linked (GlcNAc...) asparagine" evidence="4">
    <location>
        <position position="1810"/>
    </location>
</feature>
<feature type="glycosylation site" description="N-linked (GlcNAc...) asparagine" evidence="4">
    <location>
        <position position="1855"/>
    </location>
</feature>
<feature type="glycosylation site" description="N-linked (GlcNAc...) asparagine" evidence="4">
    <location>
        <position position="1895"/>
    </location>
</feature>
<feature type="glycosylation site" description="N-linked (GlcNAc...) asparagine" evidence="4">
    <location>
        <position position="1987"/>
    </location>
</feature>
<feature type="glycosylation site" description="N-linked (GlcNAc...) asparagine" evidence="4">
    <location>
        <position position="2011"/>
    </location>
</feature>
<feature type="glycosylation site" description="N-linked (GlcNAc...) asparagine" evidence="4">
    <location>
        <position position="2055"/>
    </location>
</feature>
<feature type="glycosylation site" description="N-linked (GlcNAc...) asparagine" evidence="4">
    <location>
        <position position="2070"/>
    </location>
</feature>
<feature type="glycosylation site" description="N-linked (GlcNAc...) asparagine" evidence="4">
    <location>
        <position position="2077"/>
    </location>
</feature>
<feature type="glycosylation site" description="N-linked (GlcNAc...) asparagine" evidence="4">
    <location>
        <position position="2093"/>
    </location>
</feature>
<feature type="disulfide bond" evidence="5">
    <location>
        <begin position="1078"/>
        <end position="1090"/>
    </location>
</feature>
<feature type="disulfide bond" evidence="5">
    <location>
        <begin position="1085"/>
        <end position="1103"/>
    </location>
</feature>
<feature type="disulfide bond" evidence="5">
    <location>
        <begin position="1097"/>
        <end position="1112"/>
    </location>
</feature>
<feature type="disulfide bond" evidence="5">
    <location>
        <begin position="1117"/>
        <end position="1131"/>
    </location>
</feature>
<feature type="disulfide bond" evidence="5">
    <location>
        <begin position="1125"/>
        <end position="1144"/>
    </location>
</feature>
<feature type="disulfide bond" evidence="5">
    <location>
        <begin position="1138"/>
        <end position="1153"/>
    </location>
</feature>
<feature type="disulfide bond" evidence="5">
    <location>
        <begin position="1158"/>
        <end position="1170"/>
    </location>
</feature>
<feature type="disulfide bond" evidence="5">
    <location>
        <begin position="1165"/>
        <end position="1183"/>
    </location>
</feature>
<feature type="disulfide bond" evidence="5">
    <location>
        <begin position="1177"/>
        <end position="1192"/>
    </location>
</feature>
<feature type="disulfide bond" evidence="5">
    <location>
        <begin position="1199"/>
        <end position="1211"/>
    </location>
</feature>
<feature type="disulfide bond" evidence="5">
    <location>
        <begin position="1206"/>
        <end position="1224"/>
    </location>
</feature>
<feature type="disulfide bond" evidence="5">
    <location>
        <begin position="1218"/>
        <end position="1235"/>
    </location>
</feature>
<feature type="disulfide bond" evidence="5">
    <location>
        <begin position="1239"/>
        <end position="1249"/>
    </location>
</feature>
<feature type="disulfide bond" evidence="5">
    <location>
        <begin position="1244"/>
        <end position="1262"/>
    </location>
</feature>
<feature type="disulfide bond" evidence="5">
    <location>
        <begin position="1256"/>
        <end position="1271"/>
    </location>
</feature>
<feature type="disulfide bond" evidence="5">
    <location>
        <begin position="1275"/>
        <end position="1289"/>
    </location>
</feature>
<feature type="disulfide bond" evidence="5">
    <location>
        <begin position="1283"/>
        <end position="1302"/>
    </location>
</feature>
<feature type="disulfide bond" evidence="5">
    <location>
        <begin position="1296"/>
        <end position="1315"/>
    </location>
</feature>
<feature type="disulfide bond" evidence="5">
    <location>
        <begin position="1325"/>
        <end position="1337"/>
    </location>
</feature>
<feature type="disulfide bond" evidence="5">
    <location>
        <begin position="1332"/>
        <end position="1350"/>
    </location>
</feature>
<feature type="disulfide bond" evidence="5">
    <location>
        <begin position="1344"/>
        <end position="1359"/>
    </location>
</feature>
<feature type="disulfide bond" evidence="5">
    <location>
        <begin position="1368"/>
        <end position="1381"/>
    </location>
</feature>
<feature type="disulfide bond" evidence="5">
    <location>
        <begin position="1376"/>
        <end position="1394"/>
    </location>
</feature>
<feature type="disulfide bond" evidence="5">
    <location>
        <begin position="1388"/>
        <end position="1403"/>
    </location>
</feature>
<feature type="disulfide bond" evidence="5">
    <location>
        <begin position="1419"/>
        <end position="1431"/>
    </location>
</feature>
<feature type="disulfide bond" evidence="5">
    <location>
        <begin position="1426"/>
        <end position="1444"/>
    </location>
</feature>
<feature type="disulfide bond" evidence="5">
    <location>
        <begin position="1438"/>
        <end position="1453"/>
    </location>
</feature>
<feature type="disulfide bond" evidence="5">
    <location>
        <begin position="1471"/>
        <end position="1484"/>
    </location>
</feature>
<feature type="disulfide bond" evidence="5">
    <location>
        <begin position="1478"/>
        <end position="1497"/>
    </location>
</feature>
<feature type="disulfide bond" evidence="5">
    <location>
        <begin position="1491"/>
        <end position="1506"/>
    </location>
</feature>
<feature type="disulfide bond" evidence="5">
    <location>
        <begin position="1514"/>
        <end position="1527"/>
    </location>
</feature>
<feature type="disulfide bond" evidence="5">
    <location>
        <begin position="1521"/>
        <end position="1540"/>
    </location>
</feature>
<feature type="disulfide bond" evidence="5">
    <location>
        <begin position="1534"/>
        <end position="1549"/>
    </location>
</feature>
<feature type="sequence conflict" description="In Ref. 3; AAC16739." evidence="30" ref="3">
    <original>S</original>
    <variation>F</variation>
    <location>
        <position position="706"/>
    </location>
</feature>
<feature type="sequence conflict" description="In Ref. 3; AAC16739." evidence="30" ref="3">
    <original>S</original>
    <variation>F</variation>
    <location>
        <position position="768"/>
    </location>
</feature>
<feature type="sequence conflict" description="In Ref. 1; BAA31219." evidence="30" ref="1">
    <original>S</original>
    <variation>W</variation>
    <location>
        <position position="785"/>
    </location>
</feature>
<feature type="sequence conflict" description="In Ref. 3; AAC16739." evidence="30" ref="3">
    <original>D</original>
    <variation>G</variation>
    <location>
        <position position="796"/>
    </location>
</feature>
<feature type="sequence conflict" description="In Ref. 1; BAA31219." evidence="30" ref="1">
    <original>R</original>
    <variation>G</variation>
    <location>
        <position position="953"/>
    </location>
</feature>
<feature type="sequence conflict" description="In Ref. 1; BAA31219." evidence="30" ref="1">
    <original>EQ</original>
    <variation>DE</variation>
    <location>
        <begin position="1268"/>
        <end position="1269"/>
    </location>
</feature>
<feature type="sequence conflict" description="In Ref. 1; BAA31219." evidence="30" ref="1">
    <original>H</original>
    <variation>A</variation>
    <location>
        <position position="1425"/>
    </location>
</feature>
<feature type="sequence conflict" description="In Ref. 3; AAC16739 and 4; CAA72732." evidence="30" ref="3 4">
    <original>H</original>
    <variation>R</variation>
    <location>
        <position position="1425"/>
    </location>
</feature>
<feature type="sequence conflict" description="In Ref. 1; BAA31219, 3; AAC16739 and 4; CAA72732." evidence="30" ref="1 3 4">
    <original>F</original>
    <variation>L</variation>
    <location>
        <position position="1468"/>
    </location>
</feature>
<feature type="sequence conflict" description="In Ref. 1; BAA31219, 3; AAC16739 and 4; CAA72732." evidence="30" ref="1 3 4">
    <original>S</original>
    <variation>R</variation>
    <location>
        <position position="1663"/>
    </location>
</feature>
<feature type="sequence conflict" description="In Ref. 4; CAA72732." evidence="30" ref="4">
    <original>EIKNL</original>
    <variation>KKKKK</variation>
    <location>
        <begin position="1709"/>
        <end position="1713"/>
    </location>
</feature>
<feature type="sequence conflict" description="In Ref. 1; BAA31219 and 3; AAC16739." evidence="30" ref="1 3">
    <original>R</original>
    <variation>K</variation>
    <location>
        <position position="1807"/>
    </location>
</feature>
<feature type="sequence conflict" description="In Ref. 1; BAA31219." evidence="30" ref="1">
    <original>Q</original>
    <variation>H</variation>
    <location>
        <position position="2130"/>
    </location>
</feature>
<sequence length="2215" mass="247086">MATRSSRRESRLPFLFALVALLPRGALGGGWTQRLHGGPAPLPQDRGFFVVQGDPRDLRLGTHGDAPGASPAARKPLRTRRSAALQPQPIQVYGQVSLNDSHNQMVVHWAGEKSNVIVALARDSLALARPKSSDVYVSYDYGKSFSKISEKLNFGVGNNSEAVISQFYHSPADNKRYIFVDAYAQYLWITFDFCSTIHGFSIPFRAADLLLHSKASNLLLGFDRSHPNKQLWKSDDFGQTWIMIQEHVKSFSWGIDPYDQPNAIYIERHEPFGFSTVLRSTDFFQSRENQEVILEEVRDFQLRDKYMFATKVVHLPGSQQQSSVQLWVSFGRKPMRAAQFVTKHPINEYYIADAAEDQVFVCVSHSNNSTNLYISEAEGLKFSLSLENVLYYSPGGAGSDTLVRYFANEPFADFHRVEGLQGVYIATLINGSMNEENMRSVITFDKGGTWEFLQAPAFTGYGEKINCELSQGCSLHLAQRLSQLLNLQLRRMPILSKESAPGLIIATGSVGKNLASKTNVYISSSAGARWREALPGPHYYTWGDHGGIIMAIAQGMETNELKYSTNEGETWKTFVFSEKPVFVYGLLTEPGEKSTVFTIFGSNKESVHSWLILQVNATDALGVPCTENDYKLWSPSDERGNECLLGHKTVFKRRTPHATCFNGEDFDRPVVVSNCSCTREDYECDFGFKMSEDLSLEVCVPDPEFSGKPYSPPVPCPVGSSYRRTRGYRKISGDTCSGGDVEARLEGELVPCPLAEENEFILYAMRKSIYRYDLASGATEQLPLSGLRAAVALDFDYERNCLYWSDLALDTIQRLCLNGSTGQEVIINSGLETVEALAFEPLSQLLYWVDAGFKKIEVANPDGDFRLTIVNSSVLDRPRALVLVPQEGVMFWTDWGDLKPGIYRSYMDGSAAYRLVSEDVKWPNGISVDSQWIYWTDAYLDCIERITFSGQQRSVILDSLPHPYAIAVFKNEIYWDDWSQLSIFRASKHSRSQVEILASQLTGLMDMKVFYKGKNAGSNACVPQPCSLLCLPKANNSKSCRCPEGVASSVLPSGDLMCDCPQGYQRKNNTCVKEENTCLRNQYRCSNGNCINSIWWCDFDNDCGDMSDERNCPTTVCDADTQFRCQESGTCIPLSYKCDLEDDCGDNSDESHCEMHQCRSDEFNCSSGMCIRSSWVCDGDNDCRDWSDEANCTAIYHTCEASNFQCHNGHCIPQRWACDGDADCQDGSDEDPVSCEKKCNGFHCPNGTCIPSSKHCDGLRDCPDGSDEQHCEPFCTRFMDFVCKNRQQCLFHSMVCDGIVQCRDGSDEDAAFAGCSQDPEFHKECDEFGFQCQNGVCISLIWKCDGMDDCGDYSDEANCENPTEAPNCSRYFQFHCENGHCIPNRWKCDRENDCGDWSDEKDCGDSHVLPSPTPGPSTCLPNYFHCSSGACVMGTWVCDGYRDCADGSDEEACPSLANSTAASTPTQFGQCDRFEFECHQPKKCIPNWKRCDGHQDCQDGQDEANCPTHSTLTCTSREFKCEDGEACIVLSERCDGFLDCSDESDEKACSDELTVYKVQNLQWTADFSGDVTLTWMRPKKMPSASCVYNVYYRVVGESIWKTLETHSNKTSTVLKVLKPDTTYQVKVQVHCLNKVHNTNDFVTLRTPEGLPDAPRNLQLSLNSEEEGVILGHWAPPVHTHGLIREYIVEYSRSGSKMWASQRAASNSTEIKNLLLNALYTVRVAAVTSRGIGNWSDSKSITTIKGKVIQAPNIHIDSYDENSLSFTLTMDGDIKVNGYVVNLFWSFDAHKQEKKTLSFRGGSALSHRVSNLTAHTSYEISAWAKTDLGDSPLAFEHILTRGSSPPAPSLKAKAINQTAVECIWTGPKNVVYGIFYATSFLDLYRNPKSVTTSLHNKTVIVSKDEQYLFLVRVLIPYQGPSSDYVVVKMIPDSRLPPRHLHAVHIGKTSALIKWESPYDSPDQDLFYAIAVKDLIRKTDRSYKVRSRNSTVEYSLSKLEPGGKYHIIVQLGNMSKDSSIKITTVSLSAPDALKIITENDHVLLFWKSLALKEKQFNETRGYEIHMSDSAVNLTAYLGNTTDNFFKVSNLKMGHNYTFTVQARCLFGSQICGEPAVLLYDELSSGADAAVIQAARSTDVAAVVVPILFLILLSLGVGFAILYTKHRRLQSSFSAFANSHYSSRLGSAIFSSGDDLGEDDEDAPMITGFSDDVPMVIA</sequence>
<organism>
    <name type="scientific">Mus musculus</name>
    <name type="common">Mouse</name>
    <dbReference type="NCBI Taxonomy" id="10090"/>
    <lineage>
        <taxon>Eukaryota</taxon>
        <taxon>Metazoa</taxon>
        <taxon>Chordata</taxon>
        <taxon>Craniata</taxon>
        <taxon>Vertebrata</taxon>
        <taxon>Euteleostomi</taxon>
        <taxon>Mammalia</taxon>
        <taxon>Eutheria</taxon>
        <taxon>Euarchontoglires</taxon>
        <taxon>Glires</taxon>
        <taxon>Rodentia</taxon>
        <taxon>Myomorpha</taxon>
        <taxon>Muroidea</taxon>
        <taxon>Muridae</taxon>
        <taxon>Murinae</taxon>
        <taxon>Mus</taxon>
        <taxon>Mus</taxon>
    </lineage>
</organism>
<gene>
    <name type="primary">Sorl1</name>
</gene>
<evidence type="ECO:0000250" key="1"/>
<evidence type="ECO:0000250" key="2">
    <source>
        <dbReference type="UniProtKB" id="Q92673"/>
    </source>
</evidence>
<evidence type="ECO:0000250" key="3">
    <source>
        <dbReference type="UniProtKB" id="Q95209"/>
    </source>
</evidence>
<evidence type="ECO:0000255" key="4"/>
<evidence type="ECO:0000255" key="5">
    <source>
        <dbReference type="PROSITE-ProRule" id="PRU00124"/>
    </source>
</evidence>
<evidence type="ECO:0000255" key="6">
    <source>
        <dbReference type="PROSITE-ProRule" id="PRU00316"/>
    </source>
</evidence>
<evidence type="ECO:0000256" key="7">
    <source>
        <dbReference type="SAM" id="MobiDB-lite"/>
    </source>
</evidence>
<evidence type="ECO:0000269" key="8">
    <source>
    </source>
</evidence>
<evidence type="ECO:0000269" key="9">
    <source>
    </source>
</evidence>
<evidence type="ECO:0000269" key="10">
    <source>
    </source>
</evidence>
<evidence type="ECO:0000269" key="11">
    <source>
    </source>
</evidence>
<evidence type="ECO:0000269" key="12">
    <source>
    </source>
</evidence>
<evidence type="ECO:0000269" key="13">
    <source>
    </source>
</evidence>
<evidence type="ECO:0000269" key="14">
    <source>
    </source>
</evidence>
<evidence type="ECO:0000269" key="15">
    <source>
    </source>
</evidence>
<evidence type="ECO:0000269" key="16">
    <source>
    </source>
</evidence>
<evidence type="ECO:0000269" key="17">
    <source>
    </source>
</evidence>
<evidence type="ECO:0000269" key="18">
    <source>
    </source>
</evidence>
<evidence type="ECO:0000269" key="19">
    <source>
    </source>
</evidence>
<evidence type="ECO:0000269" key="20">
    <source>
    </source>
</evidence>
<evidence type="ECO:0000269" key="21">
    <source>
    </source>
</evidence>
<evidence type="ECO:0000269" key="22">
    <source>
    </source>
</evidence>
<evidence type="ECO:0000269" key="23">
    <source>
    </source>
</evidence>
<evidence type="ECO:0000269" key="24">
    <source>
    </source>
</evidence>
<evidence type="ECO:0000269" key="25">
    <source>
    </source>
</evidence>
<evidence type="ECO:0000269" key="26">
    <source>
    </source>
</evidence>
<evidence type="ECO:0000269" key="27">
    <source>
    </source>
</evidence>
<evidence type="ECO:0000303" key="28">
    <source>
    </source>
</evidence>
<evidence type="ECO:0000303" key="29">
    <source>
    </source>
</evidence>
<evidence type="ECO:0000305" key="30"/>
<dbReference type="EMBL" id="AB015790">
    <property type="protein sequence ID" value="BAA31219.1"/>
    <property type="molecule type" value="mRNA"/>
</dbReference>
<dbReference type="EMBL" id="AK147303">
    <property type="protein sequence ID" value="BAE27834.1"/>
    <property type="molecule type" value="mRNA"/>
</dbReference>
<dbReference type="EMBL" id="AF031816">
    <property type="protein sequence ID" value="AAC16739.1"/>
    <property type="molecule type" value="mRNA"/>
</dbReference>
<dbReference type="EMBL" id="Y12004">
    <property type="protein sequence ID" value="CAA72732.1"/>
    <property type="molecule type" value="mRNA"/>
</dbReference>
<dbReference type="CCDS" id="CCDS40594.1"/>
<dbReference type="PIR" id="T00348">
    <property type="entry name" value="T00348"/>
</dbReference>
<dbReference type="RefSeq" id="NP_035566.2">
    <property type="nucleotide sequence ID" value="NM_011436.4"/>
</dbReference>
<dbReference type="BMRB" id="O88307"/>
<dbReference type="SMR" id="O88307"/>
<dbReference type="BioGRID" id="203392">
    <property type="interactions" value="10"/>
</dbReference>
<dbReference type="DIP" id="DIP-42439N"/>
<dbReference type="FunCoup" id="O88307">
    <property type="interactions" value="874"/>
</dbReference>
<dbReference type="IntAct" id="O88307">
    <property type="interactions" value="3"/>
</dbReference>
<dbReference type="MINT" id="O88307"/>
<dbReference type="STRING" id="10090.ENSMUSP00000058613"/>
<dbReference type="GlyConnect" id="2735">
    <property type="glycosylation" value="14 N-Linked glycans (12 sites)"/>
</dbReference>
<dbReference type="GlyCosmos" id="O88307">
    <property type="glycosylation" value="28 sites, 13 glycans"/>
</dbReference>
<dbReference type="GlyGen" id="O88307">
    <property type="glycosylation" value="32 sites, 24 N-linked glycans (19 sites), 1 O-linked glycan (3 sites)"/>
</dbReference>
<dbReference type="iPTMnet" id="O88307"/>
<dbReference type="PhosphoSitePlus" id="O88307"/>
<dbReference type="jPOST" id="O88307"/>
<dbReference type="PaxDb" id="10090-ENSMUSP00000058613"/>
<dbReference type="PeptideAtlas" id="O88307"/>
<dbReference type="ProteomicsDB" id="261475"/>
<dbReference type="Antibodypedia" id="32786">
    <property type="antibodies" value="273 antibodies from 38 providers"/>
</dbReference>
<dbReference type="DNASU" id="20660"/>
<dbReference type="Ensembl" id="ENSMUST00000060989.9">
    <property type="protein sequence ID" value="ENSMUSP00000058613.9"/>
    <property type="gene ID" value="ENSMUSG00000049313.9"/>
</dbReference>
<dbReference type="GeneID" id="20660"/>
<dbReference type="KEGG" id="mmu:20660"/>
<dbReference type="UCSC" id="uc009pap.1">
    <property type="organism name" value="mouse"/>
</dbReference>
<dbReference type="AGR" id="MGI:1202296"/>
<dbReference type="CTD" id="6653"/>
<dbReference type="MGI" id="MGI:1202296">
    <property type="gene designation" value="Sorl1"/>
</dbReference>
<dbReference type="VEuPathDB" id="HostDB:ENSMUSG00000049313"/>
<dbReference type="eggNOG" id="KOG1215">
    <property type="taxonomic scope" value="Eukaryota"/>
</dbReference>
<dbReference type="eggNOG" id="KOG3511">
    <property type="taxonomic scope" value="Eukaryota"/>
</dbReference>
<dbReference type="GeneTree" id="ENSGT01030000234563"/>
<dbReference type="HOGENOM" id="CLU_001389_0_0_1"/>
<dbReference type="InParanoid" id="O88307"/>
<dbReference type="OMA" id="LCPDGME"/>
<dbReference type="OrthoDB" id="443634at2759"/>
<dbReference type="PhylomeDB" id="O88307"/>
<dbReference type="TreeFam" id="TF324918"/>
<dbReference type="BioGRID-ORCS" id="20660">
    <property type="hits" value="2 hits in 80 CRISPR screens"/>
</dbReference>
<dbReference type="ChiTaRS" id="Sorl1">
    <property type="organism name" value="mouse"/>
</dbReference>
<dbReference type="PRO" id="PR:O88307"/>
<dbReference type="Proteomes" id="UP000000589">
    <property type="component" value="Chromosome 9"/>
</dbReference>
<dbReference type="RNAct" id="O88307">
    <property type="molecule type" value="protein"/>
</dbReference>
<dbReference type="Bgee" id="ENSMUSG00000049313">
    <property type="expression patterns" value="Expressed in facial nucleus and 275 other cell types or tissues"/>
</dbReference>
<dbReference type="GO" id="GO:0009986">
    <property type="term" value="C:cell surface"/>
    <property type="evidence" value="ECO:0007669"/>
    <property type="project" value="Ensembl"/>
</dbReference>
<dbReference type="GO" id="GO:0005829">
    <property type="term" value="C:cytosol"/>
    <property type="evidence" value="ECO:0007669"/>
    <property type="project" value="GOC"/>
</dbReference>
<dbReference type="GO" id="GO:0005769">
    <property type="term" value="C:early endosome"/>
    <property type="evidence" value="ECO:0000250"/>
    <property type="project" value="Alzheimers_University_of_Toronto"/>
</dbReference>
<dbReference type="GO" id="GO:0031901">
    <property type="term" value="C:early endosome membrane"/>
    <property type="evidence" value="ECO:0007669"/>
    <property type="project" value="UniProtKB-SubCell"/>
</dbReference>
<dbReference type="GO" id="GO:0005783">
    <property type="term" value="C:endoplasmic reticulum"/>
    <property type="evidence" value="ECO:0000250"/>
    <property type="project" value="Alzheimers_University_of_Toronto"/>
</dbReference>
<dbReference type="GO" id="GO:0005789">
    <property type="term" value="C:endoplasmic reticulum membrane"/>
    <property type="evidence" value="ECO:0007669"/>
    <property type="project" value="UniProtKB-SubCell"/>
</dbReference>
<dbReference type="GO" id="GO:0005768">
    <property type="term" value="C:endosome"/>
    <property type="evidence" value="ECO:0000250"/>
    <property type="project" value="UniProtKB"/>
</dbReference>
<dbReference type="GO" id="GO:0005615">
    <property type="term" value="C:extracellular space"/>
    <property type="evidence" value="ECO:0000314"/>
    <property type="project" value="UniProtKB"/>
</dbReference>
<dbReference type="GO" id="GO:0005794">
    <property type="term" value="C:Golgi apparatus"/>
    <property type="evidence" value="ECO:0000250"/>
    <property type="project" value="UniProtKB"/>
</dbReference>
<dbReference type="GO" id="GO:0031985">
    <property type="term" value="C:Golgi cisterna"/>
    <property type="evidence" value="ECO:0000250"/>
    <property type="project" value="Alzheimers_University_of_Toronto"/>
</dbReference>
<dbReference type="GO" id="GO:0000139">
    <property type="term" value="C:Golgi membrane"/>
    <property type="evidence" value="ECO:0007669"/>
    <property type="project" value="UniProtKB-SubCell"/>
</dbReference>
<dbReference type="GO" id="GO:0016020">
    <property type="term" value="C:membrane"/>
    <property type="evidence" value="ECO:0000314"/>
    <property type="project" value="UniProtKB"/>
</dbReference>
<dbReference type="GO" id="GO:0005771">
    <property type="term" value="C:multivesicular body"/>
    <property type="evidence" value="ECO:0000250"/>
    <property type="project" value="UniProtKB"/>
</dbReference>
<dbReference type="GO" id="GO:0032585">
    <property type="term" value="C:multivesicular body membrane"/>
    <property type="evidence" value="ECO:0007669"/>
    <property type="project" value="UniProtKB-SubCell"/>
</dbReference>
<dbReference type="GO" id="GO:0043025">
    <property type="term" value="C:neuronal cell body"/>
    <property type="evidence" value="ECO:0007669"/>
    <property type="project" value="Ensembl"/>
</dbReference>
<dbReference type="GO" id="GO:0005641">
    <property type="term" value="C:nuclear envelope lumen"/>
    <property type="evidence" value="ECO:0000314"/>
    <property type="project" value="Alzheimers_University_of_Toronto"/>
</dbReference>
<dbReference type="GO" id="GO:0048471">
    <property type="term" value="C:perinuclear region of cytoplasm"/>
    <property type="evidence" value="ECO:0000266"/>
    <property type="project" value="MGI"/>
</dbReference>
<dbReference type="GO" id="GO:0097356">
    <property type="term" value="C:perinucleolar compartment"/>
    <property type="evidence" value="ECO:0000314"/>
    <property type="project" value="UniProtKB"/>
</dbReference>
<dbReference type="GO" id="GO:0005886">
    <property type="term" value="C:plasma membrane"/>
    <property type="evidence" value="ECO:0000250"/>
    <property type="project" value="UniProtKB"/>
</dbReference>
<dbReference type="GO" id="GO:0055037">
    <property type="term" value="C:recycling endosome"/>
    <property type="evidence" value="ECO:0000250"/>
    <property type="project" value="Alzheimers_University_of_Toronto"/>
</dbReference>
<dbReference type="GO" id="GO:0055038">
    <property type="term" value="C:recycling endosome membrane"/>
    <property type="evidence" value="ECO:0007669"/>
    <property type="project" value="UniProtKB-SubCell"/>
</dbReference>
<dbReference type="GO" id="GO:0005802">
    <property type="term" value="C:trans-Golgi network"/>
    <property type="evidence" value="ECO:0000250"/>
    <property type="project" value="Alzheimers_University_of_Toronto"/>
</dbReference>
<dbReference type="GO" id="GO:0030658">
    <property type="term" value="C:transport vesicle membrane"/>
    <property type="evidence" value="ECO:0007669"/>
    <property type="project" value="UniProtKB-SubCell"/>
</dbReference>
<dbReference type="GO" id="GO:0001540">
    <property type="term" value="F:amyloid-beta binding"/>
    <property type="evidence" value="ECO:0007669"/>
    <property type="project" value="Ensembl"/>
</dbReference>
<dbReference type="GO" id="GO:0019828">
    <property type="term" value="F:aspartic-type endopeptidase inhibitor activity"/>
    <property type="evidence" value="ECO:0000315"/>
    <property type="project" value="Alzheimers_University_of_Toronto"/>
</dbReference>
<dbReference type="GO" id="GO:0030169">
    <property type="term" value="F:low-density lipoprotein particle binding"/>
    <property type="evidence" value="ECO:0007669"/>
    <property type="project" value="Ensembl"/>
</dbReference>
<dbReference type="GO" id="GO:0042923">
    <property type="term" value="F:neuropeptide binding"/>
    <property type="evidence" value="ECO:0007669"/>
    <property type="project" value="Ensembl"/>
</dbReference>
<dbReference type="GO" id="GO:0140318">
    <property type="term" value="F:protein transporter activity"/>
    <property type="evidence" value="ECO:0007669"/>
    <property type="project" value="Ensembl"/>
</dbReference>
<dbReference type="GO" id="GO:0031267">
    <property type="term" value="F:small GTPase binding"/>
    <property type="evidence" value="ECO:0007669"/>
    <property type="project" value="Ensembl"/>
</dbReference>
<dbReference type="GO" id="GO:0004888">
    <property type="term" value="F:transmembrane signaling receptor activity"/>
    <property type="evidence" value="ECO:0007669"/>
    <property type="project" value="Ensembl"/>
</dbReference>
<dbReference type="GO" id="GO:1990845">
    <property type="term" value="P:adaptive thermogenesis"/>
    <property type="evidence" value="ECO:0000315"/>
    <property type="project" value="UniProtKB"/>
</dbReference>
<dbReference type="GO" id="GO:0016477">
    <property type="term" value="P:cell migration"/>
    <property type="evidence" value="ECO:0007669"/>
    <property type="project" value="Ensembl"/>
</dbReference>
<dbReference type="GO" id="GO:0002024">
    <property type="term" value="P:diet induced thermogenesis"/>
    <property type="evidence" value="ECO:0000315"/>
    <property type="project" value="UniProtKB"/>
</dbReference>
<dbReference type="GO" id="GO:0099638">
    <property type="term" value="P:endosome to plasma membrane protein transport"/>
    <property type="evidence" value="ECO:0000314"/>
    <property type="project" value="MGI"/>
</dbReference>
<dbReference type="GO" id="GO:0038020">
    <property type="term" value="P:insulin receptor recycling"/>
    <property type="evidence" value="ECO:0000314"/>
    <property type="project" value="UniProtKB"/>
</dbReference>
<dbReference type="GO" id="GO:1902992">
    <property type="term" value="P:negative regulation of amyloid precursor protein catabolic process"/>
    <property type="evidence" value="ECO:0000315"/>
    <property type="project" value="Alzheimers_University_of_Toronto"/>
</dbReference>
<dbReference type="GO" id="GO:1902430">
    <property type="term" value="P:negative regulation of amyloid-beta formation"/>
    <property type="evidence" value="ECO:0000315"/>
    <property type="project" value="Alzheimers_University_of_Toronto"/>
</dbReference>
<dbReference type="GO" id="GO:0030514">
    <property type="term" value="P:negative regulation of BMP signaling pathway"/>
    <property type="evidence" value="ECO:0000315"/>
    <property type="project" value="UniProtKB"/>
</dbReference>
<dbReference type="GO" id="GO:1902997">
    <property type="term" value="P:negative regulation of neurofibrillary tangle assembly"/>
    <property type="evidence" value="ECO:0000315"/>
    <property type="project" value="Alzheimers_University_of_Toronto"/>
</dbReference>
<dbReference type="GO" id="GO:0050768">
    <property type="term" value="P:negative regulation of neurogenesis"/>
    <property type="evidence" value="ECO:0000315"/>
    <property type="project" value="Alzheimers_University_of_Toronto"/>
</dbReference>
<dbReference type="GO" id="GO:0031333">
    <property type="term" value="P:negative regulation of protein-containing complex assembly"/>
    <property type="evidence" value="ECO:0000250"/>
    <property type="project" value="Alzheimers_University_of_Toronto"/>
</dbReference>
<dbReference type="GO" id="GO:0010897">
    <property type="term" value="P:negative regulation of triglyceride catabolic process"/>
    <property type="evidence" value="ECO:0000315"/>
    <property type="project" value="UniProtKB"/>
</dbReference>
<dbReference type="GO" id="GO:0007218">
    <property type="term" value="P:neuropeptide signaling pathway"/>
    <property type="evidence" value="ECO:0007669"/>
    <property type="project" value="Ensembl"/>
</dbReference>
<dbReference type="GO" id="GO:1904179">
    <property type="term" value="P:positive regulation of adipose tissue development"/>
    <property type="evidence" value="ECO:0000315"/>
    <property type="project" value="UniProtKB"/>
</dbReference>
<dbReference type="GO" id="GO:1902955">
    <property type="term" value="P:positive regulation of early endosome to recycling endosome transport"/>
    <property type="evidence" value="ECO:0000250"/>
    <property type="project" value="Alzheimers_University_of_Toronto"/>
</dbReference>
<dbReference type="GO" id="GO:2001137">
    <property type="term" value="P:positive regulation of endocytic recycling"/>
    <property type="evidence" value="ECO:0000250"/>
    <property type="project" value="Alzheimers_University_of_Toronto"/>
</dbReference>
<dbReference type="GO" id="GO:1902953">
    <property type="term" value="P:positive regulation of ER to Golgi vesicle-mediated transport"/>
    <property type="evidence" value="ECO:0000250"/>
    <property type="project" value="Alzheimers_University_of_Toronto"/>
</dbReference>
<dbReference type="GO" id="GO:1900168">
    <property type="term" value="P:positive regulation of glial cell-derived neurotrophic factor production"/>
    <property type="evidence" value="ECO:0000315"/>
    <property type="project" value="UniProtKB"/>
</dbReference>
<dbReference type="GO" id="GO:0046628">
    <property type="term" value="P:positive regulation of insulin receptor signaling pathway"/>
    <property type="evidence" value="ECO:0000315"/>
    <property type="project" value="UniProtKB"/>
</dbReference>
<dbReference type="GO" id="GO:0045732">
    <property type="term" value="P:positive regulation of protein catabolic process"/>
    <property type="evidence" value="ECO:0000250"/>
    <property type="project" value="Alzheimers_University_of_Toronto"/>
</dbReference>
<dbReference type="GO" id="GO:0070863">
    <property type="term" value="P:positive regulation of protein exit from endoplasmic reticulum"/>
    <property type="evidence" value="ECO:0000250"/>
    <property type="project" value="Alzheimers_University_of_Toronto"/>
</dbReference>
<dbReference type="GO" id="GO:1902966">
    <property type="term" value="P:positive regulation of protein localization to early endosome"/>
    <property type="evidence" value="ECO:0000250"/>
    <property type="project" value="Alzheimers_University_of_Toronto"/>
</dbReference>
<dbReference type="GO" id="GO:0006892">
    <property type="term" value="P:post-Golgi vesicle-mediated transport"/>
    <property type="evidence" value="ECO:0000250"/>
    <property type="project" value="Alzheimers_University_of_Toronto"/>
</dbReference>
<dbReference type="GO" id="GO:0034067">
    <property type="term" value="P:protein localization to Golgi apparatus"/>
    <property type="evidence" value="ECO:0000250"/>
    <property type="project" value="Alzheimers_University_of_Toronto"/>
</dbReference>
<dbReference type="GO" id="GO:0045053">
    <property type="term" value="P:protein retention in Golgi apparatus"/>
    <property type="evidence" value="ECO:0000315"/>
    <property type="project" value="Alzheimers_University_of_Toronto"/>
</dbReference>
<dbReference type="GO" id="GO:0006605">
    <property type="term" value="P:protein targeting"/>
    <property type="evidence" value="ECO:0000314"/>
    <property type="project" value="UniProtKB"/>
</dbReference>
<dbReference type="GO" id="GO:0006622">
    <property type="term" value="P:protein targeting to lysosome"/>
    <property type="evidence" value="ECO:0000250"/>
    <property type="project" value="Alzheimers_University_of_Toronto"/>
</dbReference>
<dbReference type="GO" id="GO:0006898">
    <property type="term" value="P:receptor-mediated endocytosis"/>
    <property type="evidence" value="ECO:0007669"/>
    <property type="project" value="Ensembl"/>
</dbReference>
<dbReference type="GO" id="GO:0014910">
    <property type="term" value="P:regulation of smooth muscle cell migration"/>
    <property type="evidence" value="ECO:0007669"/>
    <property type="project" value="Ensembl"/>
</dbReference>
<dbReference type="GO" id="GO:0042147">
    <property type="term" value="P:retrograde transport, endosome to Golgi"/>
    <property type="evidence" value="ECO:0007669"/>
    <property type="project" value="Ensembl"/>
</dbReference>
<dbReference type="CDD" id="cd00063">
    <property type="entry name" value="FN3"/>
    <property type="match status" value="5"/>
</dbReference>
<dbReference type="CDD" id="cd00112">
    <property type="entry name" value="LDLa"/>
    <property type="match status" value="11"/>
</dbReference>
<dbReference type="FunFam" id="4.10.400.10:FF:000006">
    <property type="entry name" value="Putative low-density lipoprotein receptor"/>
    <property type="match status" value="1"/>
</dbReference>
<dbReference type="FunFam" id="2.130.10.10:FF:000303">
    <property type="entry name" value="Sortilin related receptor 1"/>
    <property type="match status" value="1"/>
</dbReference>
<dbReference type="FunFam" id="2.60.40.10:FF:000404">
    <property type="entry name" value="Sortilin related receptor 1"/>
    <property type="match status" value="1"/>
</dbReference>
<dbReference type="FunFam" id="2.60.40.10:FF:000416">
    <property type="entry name" value="Sortilin related receptor 1"/>
    <property type="match status" value="1"/>
</dbReference>
<dbReference type="FunFam" id="2.60.40.10:FF:000461">
    <property type="entry name" value="Sortilin related receptor 1"/>
    <property type="match status" value="1"/>
</dbReference>
<dbReference type="FunFam" id="2.60.40.10:FF:001616">
    <property type="entry name" value="Sortilin related receptor 1"/>
    <property type="match status" value="1"/>
</dbReference>
<dbReference type="FunFam" id="4.10.400.10:FF:000027">
    <property type="entry name" value="Sortilin related receptor 1"/>
    <property type="match status" value="1"/>
</dbReference>
<dbReference type="FunFam" id="4.10.400.10:FF:000030">
    <property type="entry name" value="Sortilin related receptor 1"/>
    <property type="match status" value="1"/>
</dbReference>
<dbReference type="FunFam" id="4.10.400.10:FF:000036">
    <property type="entry name" value="Sortilin related receptor 1"/>
    <property type="match status" value="1"/>
</dbReference>
<dbReference type="FunFam" id="4.10.400.10:FF:000037">
    <property type="entry name" value="Sortilin related receptor 1"/>
    <property type="match status" value="1"/>
</dbReference>
<dbReference type="FunFam" id="4.10.400.10:FF:000039">
    <property type="entry name" value="Sortilin related receptor 1"/>
    <property type="match status" value="1"/>
</dbReference>
<dbReference type="FunFam" id="4.10.400.10:FF:000041">
    <property type="entry name" value="Sortilin related receptor 1"/>
    <property type="match status" value="1"/>
</dbReference>
<dbReference type="FunFam" id="4.10.400.10:FF:000048">
    <property type="entry name" value="Sortilin related receptor 1"/>
    <property type="match status" value="1"/>
</dbReference>
<dbReference type="FunFam" id="4.10.400.10:FF:000052">
    <property type="entry name" value="Sortilin related receptor 1"/>
    <property type="match status" value="1"/>
</dbReference>
<dbReference type="FunFam" id="4.10.400.10:FF:000060">
    <property type="entry name" value="Sortilin related receptor 1"/>
    <property type="match status" value="1"/>
</dbReference>
<dbReference type="FunFam" id="2.10.70.80:FF:000002">
    <property type="entry name" value="Sortilin-related receptor isoform A"/>
    <property type="match status" value="1"/>
</dbReference>
<dbReference type="FunFam" id="2.120.10.30:FF:000021">
    <property type="entry name" value="Sortilin-related receptor isoform A"/>
    <property type="match status" value="1"/>
</dbReference>
<dbReference type="FunFam" id="3.30.60.270:FF:000002">
    <property type="entry name" value="Sortilin-related receptor isoform A"/>
    <property type="match status" value="1"/>
</dbReference>
<dbReference type="FunFam" id="4.10.400.10:FF:000033">
    <property type="entry name" value="Sortilin-related receptor isoform A"/>
    <property type="match status" value="1"/>
</dbReference>
<dbReference type="Gene3D" id="2.10.70.80">
    <property type="match status" value="1"/>
</dbReference>
<dbReference type="Gene3D" id="3.30.60.270">
    <property type="match status" value="1"/>
</dbReference>
<dbReference type="Gene3D" id="2.60.40.10">
    <property type="entry name" value="Immunoglobulins"/>
    <property type="match status" value="4"/>
</dbReference>
<dbReference type="Gene3D" id="4.10.400.10">
    <property type="entry name" value="Low-density Lipoprotein Receptor"/>
    <property type="match status" value="11"/>
</dbReference>
<dbReference type="Gene3D" id="2.120.10.30">
    <property type="entry name" value="TolB, C-terminal domain"/>
    <property type="match status" value="1"/>
</dbReference>
<dbReference type="Gene3D" id="2.130.10.10">
    <property type="entry name" value="YVTN repeat-like/Quinoprotein amine dehydrogenase"/>
    <property type="match status" value="1"/>
</dbReference>
<dbReference type="InterPro" id="IPR011042">
    <property type="entry name" value="6-blade_b-propeller_TolB-like"/>
</dbReference>
<dbReference type="InterPro" id="IPR003961">
    <property type="entry name" value="FN3_dom"/>
</dbReference>
<dbReference type="InterPro" id="IPR036116">
    <property type="entry name" value="FN3_sf"/>
</dbReference>
<dbReference type="InterPro" id="IPR013783">
    <property type="entry name" value="Ig-like_fold"/>
</dbReference>
<dbReference type="InterPro" id="IPR036055">
    <property type="entry name" value="LDL_receptor-like_sf"/>
</dbReference>
<dbReference type="InterPro" id="IPR023415">
    <property type="entry name" value="LDLR_class-A_CS"/>
</dbReference>
<dbReference type="InterPro" id="IPR000033">
    <property type="entry name" value="LDLR_classB_rpt"/>
</dbReference>
<dbReference type="InterPro" id="IPR002172">
    <property type="entry name" value="LDrepeatLR_classA_rpt"/>
</dbReference>
<dbReference type="InterPro" id="IPR031777">
    <property type="entry name" value="Sortilin_C"/>
</dbReference>
<dbReference type="InterPro" id="IPR031778">
    <property type="entry name" value="Sortilin_N"/>
</dbReference>
<dbReference type="InterPro" id="IPR006581">
    <property type="entry name" value="VPS10"/>
</dbReference>
<dbReference type="InterPro" id="IPR050310">
    <property type="entry name" value="VPS10-sortilin"/>
</dbReference>
<dbReference type="InterPro" id="IPR015943">
    <property type="entry name" value="WD40/YVTN_repeat-like_dom_sf"/>
</dbReference>
<dbReference type="PANTHER" id="PTHR12106">
    <property type="entry name" value="SORTILIN RELATED"/>
    <property type="match status" value="1"/>
</dbReference>
<dbReference type="PANTHER" id="PTHR12106:SF27">
    <property type="entry name" value="SORTILIN-RELATED RECEPTOR"/>
    <property type="match status" value="1"/>
</dbReference>
<dbReference type="Pfam" id="PF00041">
    <property type="entry name" value="fn3"/>
    <property type="match status" value="3"/>
</dbReference>
<dbReference type="Pfam" id="PF00057">
    <property type="entry name" value="Ldl_recept_a"/>
    <property type="match status" value="10"/>
</dbReference>
<dbReference type="Pfam" id="PF00058">
    <property type="entry name" value="Ldl_recept_b"/>
    <property type="match status" value="1"/>
</dbReference>
<dbReference type="Pfam" id="PF15902">
    <property type="entry name" value="Sortilin-Vps10"/>
    <property type="match status" value="1"/>
</dbReference>
<dbReference type="Pfam" id="PF15901">
    <property type="entry name" value="Sortilin_C"/>
    <property type="match status" value="1"/>
</dbReference>
<dbReference type="PRINTS" id="PR00261">
    <property type="entry name" value="LDLRECEPTOR"/>
</dbReference>
<dbReference type="SMART" id="SM00060">
    <property type="entry name" value="FN3"/>
    <property type="match status" value="6"/>
</dbReference>
<dbReference type="SMART" id="SM00192">
    <property type="entry name" value="LDLa"/>
    <property type="match status" value="11"/>
</dbReference>
<dbReference type="SMART" id="SM00135">
    <property type="entry name" value="LY"/>
    <property type="match status" value="5"/>
</dbReference>
<dbReference type="SMART" id="SM00602">
    <property type="entry name" value="VPS10"/>
    <property type="match status" value="1"/>
</dbReference>
<dbReference type="SUPFAM" id="SSF49265">
    <property type="entry name" value="Fibronectin type III"/>
    <property type="match status" value="3"/>
</dbReference>
<dbReference type="SUPFAM" id="SSF57424">
    <property type="entry name" value="LDL receptor-like module"/>
    <property type="match status" value="11"/>
</dbReference>
<dbReference type="SUPFAM" id="SSF110296">
    <property type="entry name" value="Oligoxyloglucan reducing end-specific cellobiohydrolase"/>
    <property type="match status" value="1"/>
</dbReference>
<dbReference type="SUPFAM" id="SSF63825">
    <property type="entry name" value="YWTD domain"/>
    <property type="match status" value="1"/>
</dbReference>
<dbReference type="PROSITE" id="PS01186">
    <property type="entry name" value="EGF_2"/>
    <property type="match status" value="1"/>
</dbReference>
<dbReference type="PROSITE" id="PS50853">
    <property type="entry name" value="FN3"/>
    <property type="match status" value="4"/>
</dbReference>
<dbReference type="PROSITE" id="PS01209">
    <property type="entry name" value="LDLRA_1"/>
    <property type="match status" value="10"/>
</dbReference>
<dbReference type="PROSITE" id="PS50068">
    <property type="entry name" value="LDLRA_2"/>
    <property type="match status" value="11"/>
</dbReference>
<dbReference type="PROSITE" id="PS51120">
    <property type="entry name" value="LDLRB"/>
    <property type="match status" value="5"/>
</dbReference>
<comment type="function">
    <text evidence="2 9 12 14 16 17 18 19 20 21 22 23 24">Sorting receptor that directs several proteins to their correct location within the cell. Along with AP-1 complex, involved Golgi apparatus - endosome sorting. Sorting receptor for APP, regulating its intracellular trafficking and processing into amyloidogenic-beta peptides. Retains APP in the trans-Golgi network, hence preventing its transit through late endosomes where amyloid beta peptides Abeta40 and Abeta42 are generated. May also sort newly produced amyloid-beta peptides to lysosomes for catabolism. Does not affect APP trafficking from the endoplasmic reticulum to Golgi compartments (By similarity). Sorting receptor for the BDNF receptor NTRK2/TRKB that facilitates NTRK2 trafficking between synaptic plasma membranes, postsynaptic densities and cell soma, hence positively regulates BDNF signaling by controlling the intracellular location of its receptor (PubMed:23977241). Sorting receptor for GDNF that promotes GDNF regulated, but not constitutive secretion (PubMed:21994944). Sorting receptor for the GDNF-GFRA1 complex, directing it from the cell surface to endosomes. GDNF is then targeted to lysosomes and degraded, while its receptor GFRA1 recycles back to the cell membrane, resulting in a GDNF clearance pathway. The SORL1-GFRA1 complex further targets RET for endocytosis, but not for degradation, affecting GDNF-induced neurotrophic activities (PubMed:23333276). Sorting receptor for ERBB2/HER2. Regulates ERBB2 subcellular distribution by promoting its recycling after internalization from endosomes back to the plasma membrane, hence stimulating phosphoinositide 3-kinase (PI3K)-dependent ERBB2 signaling (By similarity). Sorting receptor for lipoprotein lipase LPL. Promotes LPL localization to endosomes and later to the lysosomes, leading to degradation of newly synthesized LPL (By similarity). Potential sorting receptor for APOA5, inducing APOA5 internalization to early endosomes, then to late endosomes, wherefrom a portion is sent to lysosomes and degradation, another portion is sorted to the trans-Golgi network (By similarity). Sorting receptor for the insulin receptor INSR. Promotes recycling of internalized INSR via the Golgi apparatus back to the cell surface, thereby preventing lysosomal INSR catabolism, increasing INSR cell surface expression and strengthening insulin signal reception in adipose tissue. Does not affect INSR internalization (PubMed:27322061). Plays a role in renal ion homeostasis, controlling the phospho-regulation of SLC12A1/NKCC2 by STK39/SPAK kinase and PPP3CB/calcineurin A beta phosphatase, possibly through intracellular sorting of STK39 and PPP3CB (PubMed:20385770, PubMed:25967121). Stimulates, via the N-terminal ectodomain, the proliferation and migration of smooth muscle cells, possibly by increasing cell surface expression of the urokinase receptor uPAR/PLAUR. This may promote extracellular matrix proteolysis and hence facilitate cell migration (By similarity). By acting on the migration of intimal smooth muscle cells, may accelerate intimal thickening following vascular injury (PubMed:14764453). Promotes adhesion of monocytes (By similarity). Stimulates proliferation and migration of monocytes/macrophages. Through its action on intimal smooth muscle cells and macrophages, may accelerate intimal thickening and macrophage foam cell formation in the process of atherosclerosis (PubMed:17332490). Regulates hypoxia-enhanced adhesion of hematopoietic stem and progenitor cells to the bone marrow stromal cells via a PLAUR-mediated pathway. This function is mediated by the N-terminal ectodomain (PubMed:23486467). Metabolic regulator, which functions to maintain the adequate balance between lipid storage and oxidation in response to changing environmental conditions, such as temperature and diet. The N-terminal ectodomain negatively regulates adipose tissue energy expenditure, acting through the inhibition the BMP/Smad pathway (PubMed:26584636). May regulate signaling by the heterodimeric neurotrophic cytokine CLCF1-CRLF1 bound to the CNTFR receptor by promoting the endocytosis of the tripartite complex CLCF1-CRLF1-CNTFR and lysosomal degradation (PubMed:26858303). May regulate IL6 signaling, decreasing cis signaling, possibly by interfering with IL6-binding to membrane-bound IL6R, while up-regulating trans signaling via soluble IL6R (PubMed:28265003).</text>
</comment>
<comment type="subunit">
    <text evidence="2 3 10 11 19 20 21 23 24">After maturation cleavage, interacts (via N-terminus) with its own propeptide; this interaction prevents interaction with other ligands, including CRLF1, GDNF, GFRA1, IL6 and IL6R (By similarity). Interacts (via N-terminal ectodomain) with APP, forming a 1:1 stoichiometric complex, including with isoforms APP695, APP751 and APP770; this interaction retains APP in the trans-Golgi network and reduces processing into soluble APP-alpha and amyloid-beta peptides (PubMed:16174740, PubMed:16407538). Also interacts with APP C-terminal fragment C99 and with Abeta40 (By similarity). Interacts with beta-secretase BACE1/BACE; this interaction may affect BACE1-binding to APP and hence reduce BACE1-dependent APP cleavage (PubMed:16407538). Interacts with LRPAP1/RAP (By similarity). Interacts (via C-terminal cytosolic domain) with GGA1 and GGA2 (via N-terminal VHS domain) (By similarity). Interacts with PACS1 (By similarity). May interact (via the N-terminal ectodomain) with the morphogenetic neuropeptide, also called head activator or HA; this interaction is impaired in the presence of propeptide (By similarity). Interacts with neurotensin/NTS (By similarity). Interacts (via the N-terminal ectodomain) with PDGFB homodimer (By similarity). Interacts (via N-terminal ectodomain) with the uPA receptor PLAUR (By similarity). Interacts with uPA/PLAU and PAI1/SERPINE1, either individually or in complex with each other, leading to endocytosis (By similarity). Also interacts with PAI1/SERPINE1 in complex with tPA/PLAT. Interacts (via C-terminus) with AP-1 and AP-2 complexes (By similarity). Interacts with BMPR1A and BMPR1B (PubMed:26584636). Interacts with lipoprotein lipase LPL; this interaction is optimal in slightly acidic conditions (By similarity). Interacts (via N-terminal ectodomain) with GDNF (via propeptide) and GDNF receptor alpha-1/GFRA1, either individually or in complex with each other (By similarity). The interaction with GDNF occurs mostly intracellularly (By similarity). Also interacts with other GDNF receptor alpha family members, including GFRA2, GFRA3 and GFRA4 (By similarity). Interacts with the insulin receptor INSR; this interaction strongly increases the surface exposure of INSR (PubMed:27322061). Interacts (via cytosolic C-terminus) with STK39/SPAK (By similarity). Interacts (via N-terminal ectodomain) with the heterodimeric complex CRLF1-CLC; within this complex, the interaction is mediated predominantly by the CRLF1 moiety (By similarity). Interacts with CNTFR, as well as with the tripartite signaling complex formed by CRLF1, CLC and CNTFR (By similarity). Interacts (via N-terminal ectodomain) with IL6; this interaction leads to IL6 internalization and lysosomal degradation. Binding of SOLRL1 secreted N-terminal ectodomain to IL6 may increase IL6 trans signaling (By similarity). Interacts with secreted IL6R; this interaction leads to IL6R internalization (PubMed:28265003). Also interacts with transmembrane IL6R; this interaction does not affect subcellular location. Interacts with APOE (By similarity). Interacts with apolipoprotein E-rich beta-VLDL (By similarity). Interacts with APOA5; this interaction leads to APOA5 internalization and is abolished by heparin. Interaction with APOA5 results in enhanced binding to chylomicrons. Interacts with ROCK2 (By similarity). Interacts (via cytosolic C-terminus) with PPP3CB/calcineurin A beta (PubMed:25967121). Interacts with NTRK2/TRKB; this interaction facilitates NTRK2 trafficking between synaptic plasma membranes, postsynaptic densities and cell soma, hence positively regulates BDNF signaling (PubMed:23977241). Interacts (via cytosolic C-terminus) with HSPA12A in an ADP-dependent manner; this interaction affects SORL1 internalization and subcellular localization (By similarity). Interacts (via N-terminal ectodomain) with ERBB2/HER2 (By similarity).</text>
</comment>
<comment type="interaction">
    <interactant intactId="EBI-7540114">
        <id>O88307</id>
    </interactant>
    <interactant intactId="EBI-78814">
        <id>P12023</id>
        <label>App</label>
    </interactant>
    <organismsDiffer>false</organismsDiffer>
    <experiments>3</experiments>
</comment>
<comment type="interaction">
    <interactant intactId="EBI-7540114">
        <id>O88307</id>
    </interactant>
    <interactant intactId="EBI-775825">
        <id>Q9EQH3</id>
        <label>Vps35</label>
    </interactant>
    <organismsDiffer>false</organismsDiffer>
    <experiments>2</experiments>
</comment>
<comment type="subcellular location">
    <subcellularLocation>
        <location evidence="2">Golgi apparatus membrane</location>
        <topology evidence="2">Single-pass type I membrane protein</topology>
    </subcellularLocation>
    <subcellularLocation>
        <location evidence="2">Golgi apparatus</location>
        <location evidence="2">trans-Golgi network membrane</location>
        <topology evidence="2">Single-pass type I membrane protein</topology>
    </subcellularLocation>
    <subcellularLocation>
        <location evidence="2">Endosome membrane</location>
        <topology evidence="2">Single-pass type I membrane protein</topology>
    </subcellularLocation>
    <subcellularLocation>
        <location evidence="2">Early endosome membrane</location>
        <topology evidence="2">Single-pass type I membrane protein</topology>
    </subcellularLocation>
    <subcellularLocation>
        <location evidence="2">Recycling endosome membrane</location>
        <topology evidence="2">Single-pass type I membrane protein</topology>
    </subcellularLocation>
    <subcellularLocation>
        <location evidence="2">Endoplasmic reticulum membrane</location>
        <topology evidence="2">Single-pass type I membrane protein</topology>
    </subcellularLocation>
    <subcellularLocation>
        <location evidence="2">Endosome</location>
        <location evidence="2">Multivesicular body membrane</location>
        <topology evidence="2">Single-pass type I membrane protein</topology>
    </subcellularLocation>
    <subcellularLocation>
        <location evidence="2">Cell membrane</location>
        <topology evidence="2">Single-pass type I membrane protein</topology>
    </subcellularLocation>
    <subcellularLocation>
        <location evidence="2">Cytoplasmic vesicle</location>
        <location evidence="2">Secretory vesicle membrane</location>
        <topology evidence="2">Single-pass type I membrane protein</topology>
    </subcellularLocation>
    <subcellularLocation>
        <location evidence="8 21">Secreted</location>
    </subcellularLocation>
    <text evidence="2 8">Mostly intracellular, predominantly in the trans-Golgi network (TGN) and in endosome, as well as in endosome-to-TGN recycling compartments; found at low levels on the plasma membrane (By similarity). At the cell surface, partially subjected to proteolytic shedding that releases the ectodomain (also called soluble SORLA, solLR11 or sLR11) in the extracellular milieu (PubMed:11082041). The shedding may be catalyzed by ADAM17/TACE. Following shedding, PSEN1/presenilin-1 cleaves the remaining transmembrane fragment and catalyzes the release of a C-terminal fragment in the cytosol and of a soluble N-terminal beta fragment in the extracellular milieu. The C-terminal cytosolic fragment localizes to the nucleus. At the cell surface, the full-length protein undergoes partial clathrin-dependent endocytosis guided by clathrin adapter protein 2 (AP-2) (By similarity).</text>
</comment>
<comment type="tissue specificity">
    <text evidence="8 9 10 14 15 17 19 20 21 23 25 26 27">Highly expressed in the central nervous system, including in the brain and spinal cord, in neurons, as well as in glial cells (at protein level) (PubMed:11082041, PubMed:16174740, PubMed:21385844, PubMed:23333276, PubMed:23977241, PubMed:30679749, PubMed:9510025, PubMed:9726247). In the brain, mainly expressed in the cerebellum, hippocampus, dentate gyrus, hypothalamus, and in the cerebral cortex (at protein level) (PubMed:23333276, PubMed:27322061, PubMed:9510025, PubMed:9726247). Also detected in kidney, heart, lung and spleen (PubMed:9510025, PubMed:9726247). In the kidney, expressed in epithelial cells in the thick ascending limb of Henle's loop, the distal convoluted tubule, the connecting tubule and the cortical collecting duct (at protein level) (PubMed:20385770, PubMed:25967121). Expressed in skeletal muscle (at protein level) (PubMed:27322061, PubMed:9510025, PubMed:9726247). Expressed in adipose tissue, including in brown adipose tissue and subcutaneous white adipose tissue (PubMed:26584636, PubMed:27322061). Expressed in intimal smooth muscle cells (at protein level) (PubMed:14764453).</text>
</comment>
<comment type="developmental stage">
    <text evidence="26 27">Expression starts at 6.5 dpc (PubMed:9510025, PubMed:9726247). At 7.5 dpc, expressed over the entire embryo, with highest levels in the amnion. Up to 8.5 dpc, expression further increases and becomes more restricted to the foregut and the amnion. At 9.5 dpc, expression increases in the somites, as well as the developing gut, and is observed over the facial-cranial mesenchyme and the branchial arches. At 10.5 dpc, expression in the mesenchyme and the somites reaches its maximal intensity. At this stage, highest expression level is observed over the ventral part of the neural tube, in the marginal zone, and extends throughout the hindbrain. Also expressed in motor neurons of the spinal cord. With ongoing development, the brain becomes the main site of expression. At 11.5 dpc, expressed in the telencephalon, being restricted to the lateral aspects of the developing cerebral cortex, with highest levels in the outer layer of the neuronal tissue of the developing cerebral cortex. Also observed in the myelencephalon and in a thin cell layer in the rhombic lip of the metencephalon. At 12.5 dpc, expression begins in the mesencephalon and the diencephalon. Up to 14.5 dpc, expression levels in the developing cerebral cortex become more even and spread to more dorsal and caudal locations. At 14.5 dpc, decreased expression in the metencephalon and the myelencephalon. At 16.5 dpc, expressed over the entire cortical area, although at a slightly lower intensity. Expressed in the hypothalamus. At this stage, expression begins in the peripheral nervous system, including in the trigeminal ganglion, the dorsal root ganglia, the cochlear-vestibular ganglia and the sympathetic ganglia chain, but at lower levels compared to the central nervous system. Expressed over the mitral cell layer of the olfactory bulb and between the 2 outer walls of the gut. The overall expression levels in the cortex decrease until birth. At 18.5 dpc, the outer aspects of the cortical plate shows lower expression levels than the subventricular zone. At 18.5 dpc, expressed in the retina and the geniculate nucleus of the thalamus; this expression increases towards P0. At P0, expression levels are higher in the outer aspects of the cortical plate than in the subventricular zone (PubMed:9510025). 1 week after birth, abundantly expressed in the cerebrum, then levels decrease and become nearly undetectable at 4 weeks. Expression increases again and reaches moderate levels at 12 weeks. In the cerebellum, expressed at high levels during the first 2 weeks. Expression decreases at 4 and 8 weeks, and then increases again at 12 weeks (PubMed:9726247). Expressed in many organs outside the nervous system during organogenesis, such as the primitive gut where expression is detected already at 8.5 dpc. Other SORL1-expressing organs include the genital bud, the mesenchymal tissue, the developing skeletal muscles, the myocardium, the pituitary, the pineal, the thyroid and the Haderian glands, as well as the developing serous glands of the nasal cavity, the salivary and the submandibular glands, the pancreas, the epithelia of the stomach, the tubules of the kidney, the tooth germ, the cochlea, the nasal cavity, the trachea, the lung, the bladder and urethra, the intestine and the rectum (PubMed:9510025).</text>
</comment>
<comment type="induction">
    <text evidence="13 18 21 23">Up-regulated by BDNF in cortical neurons (at protein level) (PubMed:20007471). Up-regulated under hypoxic conditions in hematopoietic stem and progenitor cells, a physiological conditions encountered by these cells in the endosteum (at protein level) (PubMed:23486467). In brown and subcutaneous white adipose tissues, down-regulated when environmental temperature rises from cold to thermoneutrality (PubMed:26584636). Up-regulated in adipose tissue by insulin through a post-transcriptional mechanism (PubMed:27322061). Expression levels increase in the fed state and decline after fasting (PubMed:26584636).</text>
</comment>
<comment type="PTM">
    <text evidence="2">Within the Golgi apparatus, the propeptide may be cleaved off by FURIN or a furin-like protease. After cleavage, the propeptide interacts with the mature protein N-terminus, preventing the association with other ligands. At the cell surface, partially subjected to proteolytic shedding that releases the ectodomain in the extracellular milieu. The shedding may be catalyzed by ADAM17/TACE. Following shedding, PSEN1/presenilin-1 cleaves the remaining transmembrane fragment and catalyzes the release of a C-terminal fragment in the cytosol and of a soluble N-terminal beta fragment in the extracellular milieu. The C-terminal cytosolic fragment localizes to the nucleus.</text>
</comment>
<comment type="PTM">
    <text evidence="2">Phosphorylation at Ser-2207 facilitates the interaction with GGA1.</text>
</comment>
<comment type="disruption phenotype">
    <text evidence="10 12 14 17 20 21 23">Knockout mice are viable and fertile with no overt phenotype (PubMed:16174740). They tend to be lighter than their wild-type littermates, with reduced adiposity (PubMed:26584636, PubMed:27322061). On a high-fat diet, they show a reduced gain in body weight compared with wild-type littermates (PubMed:27322061). Mutant animals display improved serum biochemistry profiles compared to wild-type, with lower fasting glucose, insulin and triglyceride levels, particularly on high fat diet (PubMed:26584636, PubMed:27322061). On a high-fat diet, brown adipose tissue from knockout mice shows reduced lipid content and subcutaneous white adipose tissue contains smaller, less lipid replete adipocytes, with increased thermogenic markers (PubMed:26584636). Mutant animals exhibit an increased production of soluble APP and enhanced amount of neuron-associated amyloid-beta protein 40 and 42 in the brain at 10 months of age (PubMed:16174740). Following vascular injury, knockout mice placed on a high-fat diet show reduced intimal thickness and decreased infiltration of lipid-laden macrophages compared to wild-type littermates (PubMed:17332490). Mutant mice display elevated GDNF levels, altered dopaminergic function, marked hyperactivity, and reduced anxiety (PubMed:23333276). Knockout mice show a weak phenotype in the maintenance of renal ion balance. Under basal conditions, they exhibit significant urinary loss of potassium and calcium compared to controls. Serum Na(+), Cl(-), and K(+) levels are normal, but aldosterone levels are elevated 2-fold. Mean arterial blood pressure is decreased despite the hyperaldosteronemic phenotype (PubMed:20385770). The lack of major renal phenotype in mutant mice may be explained by the fact that animals remain responsive to vasopressin endocrine stimulation (PubMed:25967121).</text>
</comment>
<comment type="similarity">
    <text evidence="30">Belongs to the VPS10-related sortilin family. SORL1 subfamily.</text>
</comment>
<reference key="1">
    <citation type="journal article" date="1998" name="DNA Cell Biol.">
        <title>Developmental regulation of LR11 expression in murine brain.</title>
        <authorList>
            <person name="Kanaki T."/>
            <person name="Bujo H."/>
            <person name="Hirayama S."/>
            <person name="Tanaka K."/>
            <person name="Yamazaki H."/>
            <person name="Seimiya K."/>
            <person name="Morisaki N."/>
            <person name="Schneider W.J."/>
            <person name="Saito Y."/>
        </authorList>
    </citation>
    <scope>NUCLEOTIDE SEQUENCE [MRNA]</scope>
    <scope>TISSUE SPECIFICITY</scope>
    <scope>DEVELOPMENTAL STAGE</scope>
    <source>
        <tissue>Brain</tissue>
    </source>
</reference>
<reference key="2">
    <citation type="journal article" date="2005" name="Science">
        <title>The transcriptional landscape of the mammalian genome.</title>
        <authorList>
            <person name="Carninci P."/>
            <person name="Kasukawa T."/>
            <person name="Katayama S."/>
            <person name="Gough J."/>
            <person name="Frith M.C."/>
            <person name="Maeda N."/>
            <person name="Oyama R."/>
            <person name="Ravasi T."/>
            <person name="Lenhard B."/>
            <person name="Wells C."/>
            <person name="Kodzius R."/>
            <person name="Shimokawa K."/>
            <person name="Bajic V.B."/>
            <person name="Brenner S.E."/>
            <person name="Batalov S."/>
            <person name="Forrest A.R."/>
            <person name="Zavolan M."/>
            <person name="Davis M.J."/>
            <person name="Wilming L.G."/>
            <person name="Aidinis V."/>
            <person name="Allen J.E."/>
            <person name="Ambesi-Impiombato A."/>
            <person name="Apweiler R."/>
            <person name="Aturaliya R.N."/>
            <person name="Bailey T.L."/>
            <person name="Bansal M."/>
            <person name="Baxter L."/>
            <person name="Beisel K.W."/>
            <person name="Bersano T."/>
            <person name="Bono H."/>
            <person name="Chalk A.M."/>
            <person name="Chiu K.P."/>
            <person name="Choudhary V."/>
            <person name="Christoffels A."/>
            <person name="Clutterbuck D.R."/>
            <person name="Crowe M.L."/>
            <person name="Dalla E."/>
            <person name="Dalrymple B.P."/>
            <person name="de Bono B."/>
            <person name="Della Gatta G."/>
            <person name="di Bernardo D."/>
            <person name="Down T."/>
            <person name="Engstrom P."/>
            <person name="Fagiolini M."/>
            <person name="Faulkner G."/>
            <person name="Fletcher C.F."/>
            <person name="Fukushima T."/>
            <person name="Furuno M."/>
            <person name="Futaki S."/>
            <person name="Gariboldi M."/>
            <person name="Georgii-Hemming P."/>
            <person name="Gingeras T.R."/>
            <person name="Gojobori T."/>
            <person name="Green R.E."/>
            <person name="Gustincich S."/>
            <person name="Harbers M."/>
            <person name="Hayashi Y."/>
            <person name="Hensch T.K."/>
            <person name="Hirokawa N."/>
            <person name="Hill D."/>
            <person name="Huminiecki L."/>
            <person name="Iacono M."/>
            <person name="Ikeo K."/>
            <person name="Iwama A."/>
            <person name="Ishikawa T."/>
            <person name="Jakt M."/>
            <person name="Kanapin A."/>
            <person name="Katoh M."/>
            <person name="Kawasawa Y."/>
            <person name="Kelso J."/>
            <person name="Kitamura H."/>
            <person name="Kitano H."/>
            <person name="Kollias G."/>
            <person name="Krishnan S.P."/>
            <person name="Kruger A."/>
            <person name="Kummerfeld S.K."/>
            <person name="Kurochkin I.V."/>
            <person name="Lareau L.F."/>
            <person name="Lazarevic D."/>
            <person name="Lipovich L."/>
            <person name="Liu J."/>
            <person name="Liuni S."/>
            <person name="McWilliam S."/>
            <person name="Madan Babu M."/>
            <person name="Madera M."/>
            <person name="Marchionni L."/>
            <person name="Matsuda H."/>
            <person name="Matsuzawa S."/>
            <person name="Miki H."/>
            <person name="Mignone F."/>
            <person name="Miyake S."/>
            <person name="Morris K."/>
            <person name="Mottagui-Tabar S."/>
            <person name="Mulder N."/>
            <person name="Nakano N."/>
            <person name="Nakauchi H."/>
            <person name="Ng P."/>
            <person name="Nilsson R."/>
            <person name="Nishiguchi S."/>
            <person name="Nishikawa S."/>
            <person name="Nori F."/>
            <person name="Ohara O."/>
            <person name="Okazaki Y."/>
            <person name="Orlando V."/>
            <person name="Pang K.C."/>
            <person name="Pavan W.J."/>
            <person name="Pavesi G."/>
            <person name="Pesole G."/>
            <person name="Petrovsky N."/>
            <person name="Piazza S."/>
            <person name="Reed J."/>
            <person name="Reid J.F."/>
            <person name="Ring B.Z."/>
            <person name="Ringwald M."/>
            <person name="Rost B."/>
            <person name="Ruan Y."/>
            <person name="Salzberg S.L."/>
            <person name="Sandelin A."/>
            <person name="Schneider C."/>
            <person name="Schoenbach C."/>
            <person name="Sekiguchi K."/>
            <person name="Semple C.A."/>
            <person name="Seno S."/>
            <person name="Sessa L."/>
            <person name="Sheng Y."/>
            <person name="Shibata Y."/>
            <person name="Shimada H."/>
            <person name="Shimada K."/>
            <person name="Silva D."/>
            <person name="Sinclair B."/>
            <person name="Sperling S."/>
            <person name="Stupka E."/>
            <person name="Sugiura K."/>
            <person name="Sultana R."/>
            <person name="Takenaka Y."/>
            <person name="Taki K."/>
            <person name="Tammoja K."/>
            <person name="Tan S.L."/>
            <person name="Tang S."/>
            <person name="Taylor M.S."/>
            <person name="Tegner J."/>
            <person name="Teichmann S.A."/>
            <person name="Ueda H.R."/>
            <person name="van Nimwegen E."/>
            <person name="Verardo R."/>
            <person name="Wei C.L."/>
            <person name="Yagi K."/>
            <person name="Yamanishi H."/>
            <person name="Zabarovsky E."/>
            <person name="Zhu S."/>
            <person name="Zimmer A."/>
            <person name="Hide W."/>
            <person name="Bult C."/>
            <person name="Grimmond S.M."/>
            <person name="Teasdale R.D."/>
            <person name="Liu E.T."/>
            <person name="Brusic V."/>
            <person name="Quackenbush J."/>
            <person name="Wahlestedt C."/>
            <person name="Mattick J.S."/>
            <person name="Hume D.A."/>
            <person name="Kai C."/>
            <person name="Sasaki D."/>
            <person name="Tomaru Y."/>
            <person name="Fukuda S."/>
            <person name="Kanamori-Katayama M."/>
            <person name="Suzuki M."/>
            <person name="Aoki J."/>
            <person name="Arakawa T."/>
            <person name="Iida J."/>
            <person name="Imamura K."/>
            <person name="Itoh M."/>
            <person name="Kato T."/>
            <person name="Kawaji H."/>
            <person name="Kawagashira N."/>
            <person name="Kawashima T."/>
            <person name="Kojima M."/>
            <person name="Kondo S."/>
            <person name="Konno H."/>
            <person name="Nakano K."/>
            <person name="Ninomiya N."/>
            <person name="Nishio T."/>
            <person name="Okada M."/>
            <person name="Plessy C."/>
            <person name="Shibata K."/>
            <person name="Shiraki T."/>
            <person name="Suzuki S."/>
            <person name="Tagami M."/>
            <person name="Waki K."/>
            <person name="Watahiki A."/>
            <person name="Okamura-Oho Y."/>
            <person name="Suzuki H."/>
            <person name="Kawai J."/>
            <person name="Hayashizaki Y."/>
        </authorList>
    </citation>
    <scope>NUCLEOTIDE SEQUENCE [LARGE SCALE MRNA]</scope>
    <source>
        <strain>C57BL/6J</strain>
        <tissue>Brain</tissue>
    </source>
</reference>
<reference key="3">
    <citation type="journal article" date="1998" name="Mech. Dev.">
        <title>Unique expression pattern of a novel mosaic receptor in the developing cerebral cortex.</title>
        <authorList>
            <person name="Hermans-Borgmeyer I."/>
            <person name="Hampe W."/>
            <person name="Schinke B."/>
            <person name="Methner A."/>
            <person name="Nykjaer A."/>
            <person name="Suesens U."/>
            <person name="Fenger U."/>
            <person name="Herbarth B."/>
            <person name="Schaller H.C."/>
        </authorList>
    </citation>
    <scope>NUCLEOTIDE SEQUENCE [MRNA] OF 183-2215</scope>
    <scope>TISSUE SPECIFICITY</scope>
    <scope>DEVELOPMENTAL STAGE</scope>
    <source>
        <tissue>Brain</tissue>
    </source>
</reference>
<reference key="4">
    <citation type="submission" date="1997-03" db="EMBL/GenBank/DDBJ databases">
        <authorList>
            <person name="Boehmelt G."/>
            <person name="Antonio L."/>
            <person name="Iscove N.N."/>
        </authorList>
    </citation>
    <scope>NUCLEOTIDE SEQUENCE [MRNA] OF 1119-1713</scope>
    <source>
        <strain>Swiss Webster</strain>
    </source>
</reference>
<reference key="5">
    <citation type="journal article" date="2000" name="J. Cell Sci.">
        <title>Ectodomain shedding, translocation and synthesis of SorLA are stimulated by its ligand head activator.</title>
        <authorList>
            <person name="Hampe W."/>
            <person name="Riedel I.B."/>
            <person name="Lintzel J."/>
            <person name="Bader C.O."/>
            <person name="Franke I."/>
            <person name="Schaller H.C."/>
        </authorList>
    </citation>
    <scope>SUBCELLULAR LOCATION</scope>
    <scope>TISSUE SPECIFICITY</scope>
</reference>
<reference key="6">
    <citation type="journal article" date="2004" name="Circ. Res.">
        <title>LR11, an LDL receptor gene family member, is a novel regulator of smooth muscle cell migration.</title>
        <authorList>
            <person name="Zhu Y."/>
            <person name="Bujo H."/>
            <person name="Yamazaki H."/>
            <person name="Ohwaki K."/>
            <person name="Jiang M."/>
            <person name="Hirayama S."/>
            <person name="Kanaki T."/>
            <person name="Shibasaki M."/>
            <person name="Takahashi K."/>
            <person name="Schneider W.J."/>
            <person name="Saito Y."/>
        </authorList>
    </citation>
    <scope>FUNCTION</scope>
    <scope>TISSUE SPECIFICITY</scope>
</reference>
<reference key="7">
    <citation type="journal article" date="2005" name="Proc. Natl. Acad. Sci. U.S.A.">
        <title>Neuronal sorting protein-related receptor sorLA/LR11 regulates processing of the amyloid precursor protein.</title>
        <authorList>
            <person name="Andersen O.M."/>
            <person name="Reiche J."/>
            <person name="Schmidt V."/>
            <person name="Gotthardt M."/>
            <person name="Spoelgen R."/>
            <person name="Behlke J."/>
            <person name="von Arnim C.A."/>
            <person name="Breiderhoff T."/>
            <person name="Jansen P."/>
            <person name="Wu X."/>
            <person name="Bales K.R."/>
            <person name="Cappai R."/>
            <person name="Masters C.L."/>
            <person name="Gliemann J."/>
            <person name="Mufson E.J."/>
            <person name="Hyman B.T."/>
            <person name="Paul S.M."/>
            <person name="Nykjaer A."/>
            <person name="Willnow T.E."/>
        </authorList>
    </citation>
    <scope>DISRUPTION PHENOTYPE</scope>
    <scope>INTERACTION WITH APP</scope>
    <scope>TISSUE SPECIFICITY</scope>
</reference>
<reference key="8">
    <citation type="journal article" date="2006" name="J. Neurosci.">
        <title>Interaction of the cytosolic domains of sorLA/LR11 with the amyloid precursor protein (APP) and beta-secretase beta-site APP-cleaving enzyme.</title>
        <authorList>
            <person name="Spoelgen R."/>
            <person name="von Arnim C.A."/>
            <person name="Thomas A.V."/>
            <person name="Peltan I.D."/>
            <person name="Koker M."/>
            <person name="Deng A."/>
            <person name="Irizarry M.C."/>
            <person name="Andersen O.M."/>
            <person name="Willnow T.E."/>
            <person name="Hyman B.T."/>
        </authorList>
    </citation>
    <scope>INTERACTION WITH APP AND BACE1</scope>
</reference>
<reference key="9">
    <citation type="journal article" date="2007" name="Arterioscler. Thromb. Vasc. Biol.">
        <title>A secreted soluble form of LR11, specifically expressed in intimal smooth muscle cells, accelerates formation of lipid-laden macrophages.</title>
        <authorList>
            <person name="Ohwaki K."/>
            <person name="Bujo H."/>
            <person name="Jiang M."/>
            <person name="Yamazaki H."/>
            <person name="Schneider W.J."/>
            <person name="Saito Y."/>
        </authorList>
    </citation>
    <scope>FUNCTION</scope>
    <scope>DISRUPTION PHENOTYPE</scope>
</reference>
<reference key="10">
    <citation type="journal article" date="2009" name="J. Neurosci.">
        <title>Brain-derived neurotrophic factor reduces amyloidogenic processing through control of SORLA gene expression.</title>
        <authorList>
            <person name="Rohe M."/>
            <person name="Synowitz M."/>
            <person name="Glass R."/>
            <person name="Paul S.M."/>
            <person name="Nykjaer A."/>
            <person name="Willnow T.E."/>
        </authorList>
    </citation>
    <scope>INDUCTION BY BDNF</scope>
</reference>
<reference key="11">
    <citation type="journal article" date="2010" name="Cell">
        <title>A tissue-specific atlas of mouse protein phosphorylation and expression.</title>
        <authorList>
            <person name="Huttlin E.L."/>
            <person name="Jedrychowski M.P."/>
            <person name="Elias J.E."/>
            <person name="Goswami T."/>
            <person name="Rad R."/>
            <person name="Beausoleil S.A."/>
            <person name="Villen J."/>
            <person name="Haas W."/>
            <person name="Sowa M.E."/>
            <person name="Gygi S.P."/>
        </authorList>
    </citation>
    <scope>IDENTIFICATION BY MASS SPECTROMETRY [LARGE SCALE ANALYSIS]</scope>
    <source>
        <tissue>Brain</tissue>
        <tissue>Kidney</tissue>
        <tissue>Lung</tissue>
        <tissue>Spleen</tissue>
        <tissue>Testis</tissue>
    </source>
</reference>
<reference key="12">
    <citation type="journal article" date="2010" name="Mol. Cell. Biol.">
        <title>SORLA/SORL1 functionally interacts with SPAK to control renal activation of Na(+)-K(+)-Cl(-) cotransporter 2.</title>
        <authorList>
            <person name="Reiche J."/>
            <person name="Theilig F."/>
            <person name="Rafiqi F.H."/>
            <person name="Carlo A.S."/>
            <person name="Militz D."/>
            <person name="Mutig K."/>
            <person name="Todiras M."/>
            <person name="Christensen E.I."/>
            <person name="Ellison D.H."/>
            <person name="Bader M."/>
            <person name="Nykjaer A."/>
            <person name="Bachmann S."/>
            <person name="Alessi D."/>
            <person name="Willnow T.E."/>
        </authorList>
    </citation>
    <scope>TISSUE SPECIFICITY</scope>
    <scope>DISRUPTION PHENOTYPE</scope>
</reference>
<reference key="13">
    <citation type="journal article" date="2011" name="J. Biol. Chem.">
        <title>Sorting protein-related receptor SorLA controls regulated secretion of glial cell line-derived neurotrophic factor.</title>
        <authorList>
            <person name="Geng Z."/>
            <person name="Xu F.Y."/>
            <person name="Huang S.H."/>
            <person name="Chen Z.Y."/>
        </authorList>
    </citation>
    <scope>FUNCTION</scope>
</reference>
<reference key="14">
    <citation type="journal article" date="2011" name="J. Cell Sci.">
        <title>SorLA regulates the activity of lipoprotein lipase by intracellular trafficking.</title>
        <authorList>
            <person name="Klinger S.C."/>
            <person name="Glerup S."/>
            <person name="Raarup M.K."/>
            <person name="Mari M.C."/>
            <person name="Nyegaard M."/>
            <person name="Koster G."/>
            <person name="Prabakaran T."/>
            <person name="Nilsson S.K."/>
            <person name="Kjaergaard M.M."/>
            <person name="Bakke O."/>
            <person name="Nykjaer A."/>
            <person name="Olivecrona G."/>
            <person name="Petersen C.M."/>
            <person name="Nielsen M.S."/>
        </authorList>
    </citation>
    <scope>TISSUE SPECIFICITY</scope>
</reference>
<reference key="15">
    <citation type="journal article" date="2013" name="Cell Rep.">
        <title>SorLA controls neurotrophic activity by sorting of GDNF and its receptors GFRalpha1 and RET.</title>
        <authorList>
            <person name="Glerup S."/>
            <person name="Lume M."/>
            <person name="Olsen D."/>
            <person name="Nyengaard J.R."/>
            <person name="Vaegter C.B."/>
            <person name="Gustafsen C."/>
            <person name="Christensen E.I."/>
            <person name="Kjolby M."/>
            <person name="Hay-Schmidt A."/>
            <person name="Bender D."/>
            <person name="Madsen P."/>
            <person name="Saarma M."/>
            <person name="Nykjaer A."/>
            <person name="Petersen C.M."/>
        </authorList>
    </citation>
    <scope>FUNCTION</scope>
    <scope>DISRUPTION PHENOTYPE</scope>
    <scope>TISSUE SPECIFICITY</scope>
</reference>
<reference key="16">
    <citation type="journal article" date="2013" name="J. Biol. Chem.">
        <title>The soluble form of LR11 protein is a regulator of hypoxia-induced, urokinase-type plasminogen activator receptor (uPAR)-mediated adhesion of immature hematological cells.</title>
        <authorList>
            <person name="Nishii K."/>
            <person name="Nakaseko C."/>
            <person name="Jiang M."/>
            <person name="Shimizu N."/>
            <person name="Takeuchi M."/>
            <person name="Schneider W.J."/>
            <person name="Bujo H."/>
        </authorList>
    </citation>
    <scope>FUNCTION</scope>
    <scope>INDUCTION BY HYPOXIA</scope>
</reference>
<reference key="17">
    <citation type="journal article" date="2013" name="PLoS ONE">
        <title>SORLA-mediated trafficking of TrkB enhances the response of neurons to BDNF.</title>
        <authorList>
            <person name="Rohe M."/>
            <person name="Hartl D."/>
            <person name="Fjorback A.N."/>
            <person name="Klose J."/>
            <person name="Willnow T.E."/>
        </authorList>
    </citation>
    <scope>FUNCTION</scope>
    <scope>INTERACTION WITH NTRK2</scope>
    <scope>TISSUE SPECIFICITY</scope>
</reference>
<reference key="18">
    <citation type="journal article" date="2015" name="Nat. Commun.">
        <title>Soluble LR11/SorLA represses thermogenesis in adipose tissue and correlates with BMI in humans.</title>
        <authorList>
            <person name="Whittle A.J."/>
            <person name="Jiang M."/>
            <person name="Peirce V."/>
            <person name="Relat J."/>
            <person name="Virtue S."/>
            <person name="Ebinuma H."/>
            <person name="Fukamachi I."/>
            <person name="Yamaguchi T."/>
            <person name="Takahashi M."/>
            <person name="Murano T."/>
            <person name="Tatsuno I."/>
            <person name="Takeuchi M."/>
            <person name="Nakaseko C."/>
            <person name="Jin W."/>
            <person name="Jin Z."/>
            <person name="Campbell M."/>
            <person name="Schneider W.J."/>
            <person name="Vidal-Puig A."/>
            <person name="Bujo H."/>
        </authorList>
    </citation>
    <scope>FUNCTION</scope>
    <scope>INTERACTION WITH BMPR1A AND BMPR1B</scope>
    <scope>SUBCELLULAR LOCATION</scope>
    <scope>DISRUPTION PHENOTYPE</scope>
    <scope>TISSUE SPECIFICITY</scope>
    <scope>INDUCTION BY TEMPERATURE AND ENERGY AVAILABILITY</scope>
</reference>
<reference key="19">
    <citation type="journal article" date="2016" name="J. Am. Soc. Nephrol.">
        <title>Calcineurin and sorting-related receptor with A-type repeats interact to regulate the renal Na(+)-K(+)-2Cl(-) cotransporter.</title>
        <authorList>
            <person name="Borschewski A."/>
            <person name="Himmerkus N."/>
            <person name="Boldt C."/>
            <person name="Blankenstein K.I."/>
            <person name="McCormick J.A."/>
            <person name="Lazelle R."/>
            <person name="Willnow T.E."/>
            <person name="Jankowski V."/>
            <person name="Plain A."/>
            <person name="Bleich M."/>
            <person name="Ellison D.H."/>
            <person name="Bachmann S."/>
            <person name="Mutig K."/>
        </authorList>
    </citation>
    <scope>FUNCTION</scope>
    <scope>INTERACTION WITH PPP3CB</scope>
    <scope>TISSUE SPECIFICITY</scope>
    <scope>DISRUPTION PHENOTYPE</scope>
</reference>
<reference key="20">
    <citation type="journal article" date="2016" name="J. Clin. Invest.">
        <title>SORLA facilitates insulin receptor signaling in adipocytes and exacerbates obesity.</title>
        <authorList>
            <person name="Schmidt V."/>
            <person name="Schulz N."/>
            <person name="Yan X."/>
            <person name="Schuermann A."/>
            <person name="Kempa S."/>
            <person name="Kern M."/>
            <person name="Blueher M."/>
            <person name="Poy M.N."/>
            <person name="Olivecrona G."/>
            <person name="Willnow T.E."/>
        </authorList>
    </citation>
    <scope>FUNCTION</scope>
    <scope>INTERACTION WITH INSR</scope>
    <scope>INDUCTION BY INSULIN</scope>
    <scope>DISRUPTION PHENOTYPE</scope>
    <scope>TISSUE SPECIFICITY</scope>
</reference>
<reference key="21">
    <citation type="journal article" date="2016" name="Mol. Cell. Biol.">
        <title>Cytokine-like factor 1, an essential facilitator of cardiotrophin-like cytokine:ciliary neurotrophic factor receptor alpha signaling and sorLA-mediated turnover.</title>
        <authorList>
            <person name="Larsen J.V."/>
            <person name="Kristensen A.M."/>
            <person name="Pallesen L.T."/>
            <person name="Bauer J."/>
            <person name="Vaegter C.B."/>
            <person name="Nielsen M.S."/>
            <person name="Madsen P."/>
            <person name="Petersen C.M."/>
        </authorList>
    </citation>
    <scope>FUNCTION</scope>
</reference>
<reference key="22">
    <citation type="journal article" date="2017" name="Mol. Cell. Biol.">
        <title>SorLA in Interleukin-6 Signaling and Turnover.</title>
        <authorList>
            <person name="Larsen J.V."/>
            <person name="Petersen C.M."/>
        </authorList>
    </citation>
    <scope>FUNCTION</scope>
    <scope>INTERACTION WITH IL6 AND IL6R</scope>
</reference>
<reference key="23">
    <citation type="journal article" date="2019" name="Sci. Rep.">
        <title>HSPA12A targets the cytoplasmic domain and affects the trafficking of the Amyloid Precursor Protein receptor SorLA.</title>
        <authorList>
            <person name="Madsen P."/>
            <person name="Isaksen T.J."/>
            <person name="Siupka P."/>
            <person name="Toth A.E."/>
            <person name="Nyegaard M."/>
            <person name="Gustafsen C."/>
            <person name="Nielsen M.S."/>
        </authorList>
    </citation>
    <scope>TISSUE SPECIFICITY</scope>
</reference>
<accession>O88307</accession>
<accession>O54711</accession>
<accession>O70581</accession>
<accession>Q3UHM3</accession>
<name>SORL_MOUSE</name>
<proteinExistence type="evidence at protein level"/>
<keyword id="KW-1003">Cell membrane</keyword>
<keyword id="KW-0165">Cleavage on pair of basic residues</keyword>
<keyword id="KW-0968">Cytoplasmic vesicle</keyword>
<keyword id="KW-0217">Developmental protein</keyword>
<keyword id="KW-1015">Disulfide bond</keyword>
<keyword id="KW-0245">EGF-like domain</keyword>
<keyword id="KW-0254">Endocytosis</keyword>
<keyword id="KW-0256">Endoplasmic reticulum</keyword>
<keyword id="KW-0967">Endosome</keyword>
<keyword id="KW-0325">Glycoprotein</keyword>
<keyword id="KW-0333">Golgi apparatus</keyword>
<keyword id="KW-0472">Membrane</keyword>
<keyword id="KW-0597">Phosphoprotein</keyword>
<keyword id="KW-0675">Receptor</keyword>
<keyword id="KW-1185">Reference proteome</keyword>
<keyword id="KW-0677">Repeat</keyword>
<keyword id="KW-0964">Secreted</keyword>
<keyword id="KW-0732">Signal</keyword>
<keyword id="KW-0812">Transmembrane</keyword>
<keyword id="KW-1133">Transmembrane helix</keyword>
<keyword id="KW-0813">Transport</keyword>